<gene>
    <name evidence="1" type="primary">glmS</name>
</gene>
<accession>Q56275</accession>
<feature type="initiator methionine" description="Removed" evidence="1">
    <location>
        <position position="1"/>
    </location>
</feature>
<feature type="chain" id="PRO_0000135404" description="Glutamine--fructose-6-phosphate aminotransferase [isomerizing]">
    <location>
        <begin position="2"/>
        <end position="611"/>
    </location>
</feature>
<feature type="domain" description="Glutamine amidotransferase type-2" evidence="1">
    <location>
        <begin position="2"/>
        <end position="219"/>
    </location>
</feature>
<feature type="domain" description="SIS 1" evidence="1">
    <location>
        <begin position="287"/>
        <end position="427"/>
    </location>
</feature>
<feature type="domain" description="SIS 2" evidence="1">
    <location>
        <begin position="460"/>
        <end position="601"/>
    </location>
</feature>
<feature type="active site" description="Nucleophile; for GATase activity" evidence="1">
    <location>
        <position position="2"/>
    </location>
</feature>
<feature type="active site" description="For Fru-6P isomerization activity" evidence="1">
    <location>
        <position position="606"/>
    </location>
</feature>
<dbReference type="EC" id="2.6.1.16" evidence="1"/>
<dbReference type="EMBL" id="AF032884">
    <property type="protein sequence ID" value="AAC21670.1"/>
    <property type="molecule type" value="Genomic_DNA"/>
</dbReference>
<dbReference type="PIR" id="T45493">
    <property type="entry name" value="T45493"/>
</dbReference>
<dbReference type="SMR" id="Q56275"/>
<dbReference type="GO" id="GO:0005829">
    <property type="term" value="C:cytosol"/>
    <property type="evidence" value="ECO:0007669"/>
    <property type="project" value="TreeGrafter"/>
</dbReference>
<dbReference type="GO" id="GO:0097367">
    <property type="term" value="F:carbohydrate derivative binding"/>
    <property type="evidence" value="ECO:0007669"/>
    <property type="project" value="InterPro"/>
</dbReference>
<dbReference type="GO" id="GO:0004360">
    <property type="term" value="F:glutamine-fructose-6-phosphate transaminase (isomerizing) activity"/>
    <property type="evidence" value="ECO:0007669"/>
    <property type="project" value="UniProtKB-UniRule"/>
</dbReference>
<dbReference type="GO" id="GO:0005975">
    <property type="term" value="P:carbohydrate metabolic process"/>
    <property type="evidence" value="ECO:0007669"/>
    <property type="project" value="UniProtKB-UniRule"/>
</dbReference>
<dbReference type="GO" id="GO:0006002">
    <property type="term" value="P:fructose 6-phosphate metabolic process"/>
    <property type="evidence" value="ECO:0007669"/>
    <property type="project" value="TreeGrafter"/>
</dbReference>
<dbReference type="GO" id="GO:0006487">
    <property type="term" value="P:protein N-linked glycosylation"/>
    <property type="evidence" value="ECO:0007669"/>
    <property type="project" value="TreeGrafter"/>
</dbReference>
<dbReference type="GO" id="GO:0006047">
    <property type="term" value="P:UDP-N-acetylglucosamine metabolic process"/>
    <property type="evidence" value="ECO:0007669"/>
    <property type="project" value="TreeGrafter"/>
</dbReference>
<dbReference type="CDD" id="cd00714">
    <property type="entry name" value="GFAT"/>
    <property type="match status" value="1"/>
</dbReference>
<dbReference type="CDD" id="cd05008">
    <property type="entry name" value="SIS_GlmS_GlmD_1"/>
    <property type="match status" value="1"/>
</dbReference>
<dbReference type="CDD" id="cd05009">
    <property type="entry name" value="SIS_GlmS_GlmD_2"/>
    <property type="match status" value="1"/>
</dbReference>
<dbReference type="FunFam" id="3.40.50.10490:FF:000001">
    <property type="entry name" value="Glutamine--fructose-6-phosphate aminotransferase [isomerizing]"/>
    <property type="match status" value="1"/>
</dbReference>
<dbReference type="FunFam" id="3.40.50.10490:FF:000002">
    <property type="entry name" value="Glutamine--fructose-6-phosphate aminotransferase [isomerizing]"/>
    <property type="match status" value="1"/>
</dbReference>
<dbReference type="FunFam" id="3.60.20.10:FF:000006">
    <property type="entry name" value="Glutamine--fructose-6-phosphate aminotransferase [isomerizing]"/>
    <property type="match status" value="1"/>
</dbReference>
<dbReference type="Gene3D" id="3.40.50.10490">
    <property type="entry name" value="Glucose-6-phosphate isomerase like protein, domain 1"/>
    <property type="match status" value="2"/>
</dbReference>
<dbReference type="Gene3D" id="3.60.20.10">
    <property type="entry name" value="Glutamine Phosphoribosylpyrophosphate, subunit 1, domain 1"/>
    <property type="match status" value="1"/>
</dbReference>
<dbReference type="HAMAP" id="MF_00164">
    <property type="entry name" value="GlmS"/>
    <property type="match status" value="1"/>
</dbReference>
<dbReference type="InterPro" id="IPR017932">
    <property type="entry name" value="GATase_2_dom"/>
</dbReference>
<dbReference type="InterPro" id="IPR005855">
    <property type="entry name" value="GFAT"/>
</dbReference>
<dbReference type="InterPro" id="IPR047084">
    <property type="entry name" value="GFAT_N"/>
</dbReference>
<dbReference type="InterPro" id="IPR035466">
    <property type="entry name" value="GlmS/AgaS_SIS"/>
</dbReference>
<dbReference type="InterPro" id="IPR035490">
    <property type="entry name" value="GlmS/FrlB_SIS"/>
</dbReference>
<dbReference type="InterPro" id="IPR029055">
    <property type="entry name" value="Ntn_hydrolases_N"/>
</dbReference>
<dbReference type="InterPro" id="IPR001347">
    <property type="entry name" value="SIS_dom"/>
</dbReference>
<dbReference type="InterPro" id="IPR046348">
    <property type="entry name" value="SIS_dom_sf"/>
</dbReference>
<dbReference type="NCBIfam" id="TIGR01135">
    <property type="entry name" value="glmS"/>
    <property type="match status" value="1"/>
</dbReference>
<dbReference type="NCBIfam" id="NF001484">
    <property type="entry name" value="PRK00331.1"/>
    <property type="match status" value="1"/>
</dbReference>
<dbReference type="PANTHER" id="PTHR10937">
    <property type="entry name" value="GLUCOSAMINE--FRUCTOSE-6-PHOSPHATE AMINOTRANSFERASE, ISOMERIZING"/>
    <property type="match status" value="1"/>
</dbReference>
<dbReference type="PANTHER" id="PTHR10937:SF0">
    <property type="entry name" value="GLUTAMINE--FRUCTOSE-6-PHOSPHATE TRANSAMINASE (ISOMERIZING)"/>
    <property type="match status" value="1"/>
</dbReference>
<dbReference type="Pfam" id="PF13522">
    <property type="entry name" value="GATase_6"/>
    <property type="match status" value="1"/>
</dbReference>
<dbReference type="Pfam" id="PF01380">
    <property type="entry name" value="SIS"/>
    <property type="match status" value="2"/>
</dbReference>
<dbReference type="SUPFAM" id="SSF56235">
    <property type="entry name" value="N-terminal nucleophile aminohydrolases (Ntn hydrolases)"/>
    <property type="match status" value="1"/>
</dbReference>
<dbReference type="SUPFAM" id="SSF53697">
    <property type="entry name" value="SIS domain"/>
    <property type="match status" value="1"/>
</dbReference>
<dbReference type="PROSITE" id="PS51278">
    <property type="entry name" value="GATASE_TYPE_2"/>
    <property type="match status" value="1"/>
</dbReference>
<dbReference type="PROSITE" id="PS51464">
    <property type="entry name" value="SIS"/>
    <property type="match status" value="2"/>
</dbReference>
<sequence>MCGIVGGVSKTDLVPMILEGLQRLEYRGYDSAGLAILGADADLLRVRSVGRVAELTAAVVERGLQGQVGIGHTRWATHGGVRECNAHPMISHEQIAVVHNGIIENFHALRAHLEAAGYTFTSETDTEVIAHLVHHYRQTAPDLFAATRRAVGDLRGAYAIAVISSGDPETVCVARMGCPLLLGVADDGHYFASDVAALLPVTRRVLYLEDGDVAMLQRQTLRITDQAGASRQREEHWSQLSAAAVDLGPYRHFMQKEIHEQPRAVADTLEGALNSQLDLTDLWGDGAAAMFRDVDRVLFLASGTSHYATLVGRQWVESIVGIPAQAELGHEYRYRDSIPDPRQLVVTLSQSGETLDTFEALRRAKDLGHTRTLAICNVAESAIPRASALRFLTRAGPEIGVASTKAFTTQLAALYLLALSLAKAPGASERCAAGGSPGRLRQLPGSVQHALNLEPQIQGWAARFASKDHALFLGRGLHYPIALEGALKLKEISYIHAEAYPAGELKHGPLALVDRDMPVVVIAPNDRLLEKLAANMQEVHARGGELYVFADSDSHFNASAGVHVMRLPRHAGLLSPIVHAIPVQLLAYHAALVKGTDVDRPRNLAKSVTVE</sequence>
<evidence type="ECO:0000255" key="1">
    <source>
        <dbReference type="HAMAP-Rule" id="MF_00164"/>
    </source>
</evidence>
<reference key="1">
    <citation type="submission" date="1997-10" db="EMBL/GenBank/DDBJ databases">
        <authorList>
            <person name="Sarnovsky R.J."/>
            <person name="Craig N.L."/>
            <person name="Oppon J.C."/>
            <person name="Rawlings D.E."/>
        </authorList>
    </citation>
    <scope>NUCLEOTIDE SEQUENCE [GENOMIC DNA]</scope>
    <source>
        <strain>ATCC 33020 / DSM 29468 / JCM 18981 / 11Fe</strain>
    </source>
</reference>
<protein>
    <recommendedName>
        <fullName evidence="1">Glutamine--fructose-6-phosphate aminotransferase [isomerizing]</fullName>
        <ecNumber evidence="1">2.6.1.16</ecNumber>
    </recommendedName>
    <alternativeName>
        <fullName evidence="1">D-fructose-6-phosphate amidotransferase</fullName>
    </alternativeName>
    <alternativeName>
        <fullName evidence="1">GFAT</fullName>
    </alternativeName>
    <alternativeName>
        <fullName evidence="1">Glucosamine-6-phosphate synthase</fullName>
    </alternativeName>
    <alternativeName>
        <fullName evidence="1">Hexosephosphate aminotransferase</fullName>
    </alternativeName>
    <alternativeName>
        <fullName evidence="1">L-glutamine--D-fructose-6-phosphate amidotransferase</fullName>
    </alternativeName>
</protein>
<comment type="function">
    <text evidence="1">Catalyzes the first step in hexosamine metabolism, converting fructose-6P into glucosamine-6P using glutamine as a nitrogen source.</text>
</comment>
<comment type="catalytic activity">
    <reaction evidence="1">
        <text>D-fructose 6-phosphate + L-glutamine = D-glucosamine 6-phosphate + L-glutamate</text>
        <dbReference type="Rhea" id="RHEA:13237"/>
        <dbReference type="ChEBI" id="CHEBI:29985"/>
        <dbReference type="ChEBI" id="CHEBI:58359"/>
        <dbReference type="ChEBI" id="CHEBI:58725"/>
        <dbReference type="ChEBI" id="CHEBI:61527"/>
        <dbReference type="EC" id="2.6.1.16"/>
    </reaction>
</comment>
<comment type="subunit">
    <text evidence="1">Homodimer.</text>
</comment>
<comment type="subcellular location">
    <subcellularLocation>
        <location evidence="1">Cytoplasm</location>
    </subcellularLocation>
</comment>
<keyword id="KW-0032">Aminotransferase</keyword>
<keyword id="KW-0963">Cytoplasm</keyword>
<keyword id="KW-0315">Glutamine amidotransferase</keyword>
<keyword id="KW-0677">Repeat</keyword>
<keyword id="KW-0808">Transferase</keyword>
<organism>
    <name type="scientific">Acidithiobacillus ferridurans</name>
    <dbReference type="NCBI Taxonomy" id="1232575"/>
    <lineage>
        <taxon>Bacteria</taxon>
        <taxon>Pseudomonadati</taxon>
        <taxon>Pseudomonadota</taxon>
        <taxon>Acidithiobacillia</taxon>
        <taxon>Acidithiobacillales</taxon>
        <taxon>Acidithiobacillaceae</taxon>
        <taxon>Acidithiobacillus</taxon>
    </lineage>
</organism>
<proteinExistence type="inferred from homology"/>
<name>GLMS_ACIFI</name>